<evidence type="ECO:0000250" key="1">
    <source>
        <dbReference type="UniProtKB" id="P53667"/>
    </source>
</evidence>
<evidence type="ECO:0000255" key="2">
    <source>
        <dbReference type="PROSITE-ProRule" id="PRU00125"/>
    </source>
</evidence>
<evidence type="ECO:0000255" key="3">
    <source>
        <dbReference type="PROSITE-ProRule" id="PRU00143"/>
    </source>
</evidence>
<evidence type="ECO:0000255" key="4">
    <source>
        <dbReference type="PROSITE-ProRule" id="PRU00159"/>
    </source>
</evidence>
<evidence type="ECO:0000256" key="5">
    <source>
        <dbReference type="SAM" id="MobiDB-lite"/>
    </source>
</evidence>
<evidence type="ECO:0000269" key="6">
    <source>
    </source>
</evidence>
<evidence type="ECO:0000269" key="7">
    <source>
    </source>
</evidence>
<evidence type="ECO:0000269" key="8">
    <source>
    </source>
</evidence>
<evidence type="ECO:0000269" key="9">
    <source>
    </source>
</evidence>
<evidence type="ECO:0000269" key="10">
    <source>
    </source>
</evidence>
<evidence type="ECO:0000305" key="11"/>
<evidence type="ECO:0007744" key="12">
    <source>
    </source>
</evidence>
<protein>
    <recommendedName>
        <fullName>LIM domain kinase 1</fullName>
        <shortName>LIMK-1</shortName>
        <ecNumber evidence="1">2.7.11.1</ecNumber>
    </recommendedName>
    <alternativeName>
        <fullName>KIZ-1</fullName>
    </alternativeName>
</protein>
<dbReference type="EC" id="2.7.11.1" evidence="1"/>
<dbReference type="EMBL" id="X86569">
    <property type="protein sequence ID" value="CAA60377.1"/>
    <property type="molecule type" value="mRNA"/>
</dbReference>
<dbReference type="EMBL" id="U15159">
    <property type="protein sequence ID" value="AAC52254.1"/>
    <property type="molecule type" value="mRNA"/>
</dbReference>
<dbReference type="EMBL" id="AF139987">
    <property type="protein sequence ID" value="AAD34858.1"/>
    <property type="molecule type" value="Genomic_DNA"/>
</dbReference>
<dbReference type="EMBL" id="AF289665">
    <property type="protein sequence ID" value="AAF99334.1"/>
    <property type="molecule type" value="Genomic_DNA"/>
</dbReference>
<dbReference type="EMBL" id="U14166">
    <property type="protein sequence ID" value="AAC52147.1"/>
    <property type="molecule type" value="mRNA"/>
</dbReference>
<dbReference type="CCDS" id="CCDS19724.1"/>
<dbReference type="PIR" id="I48737">
    <property type="entry name" value="I48737"/>
</dbReference>
<dbReference type="RefSeq" id="NP_034847.1">
    <property type="nucleotide sequence ID" value="NM_010717.3"/>
</dbReference>
<dbReference type="SMR" id="P53668"/>
<dbReference type="BioGRID" id="201166">
    <property type="interactions" value="8"/>
</dbReference>
<dbReference type="CORUM" id="P53668"/>
<dbReference type="FunCoup" id="P53668">
    <property type="interactions" value="1256"/>
</dbReference>
<dbReference type="IntAct" id="P53668">
    <property type="interactions" value="1"/>
</dbReference>
<dbReference type="MINT" id="P53668"/>
<dbReference type="STRING" id="10090.ENSMUSP00000015137"/>
<dbReference type="GlyGen" id="P53668">
    <property type="glycosylation" value="1 site, 1 O-linked glycan (1 site)"/>
</dbReference>
<dbReference type="iPTMnet" id="P53668"/>
<dbReference type="PhosphoSitePlus" id="P53668"/>
<dbReference type="SwissPalm" id="P53668"/>
<dbReference type="jPOST" id="P53668"/>
<dbReference type="PaxDb" id="10090-ENSMUSP00000015137"/>
<dbReference type="ProteomicsDB" id="292259"/>
<dbReference type="Pumba" id="P53668"/>
<dbReference type="Antibodypedia" id="14576">
    <property type="antibodies" value="1019 antibodies from 42 providers"/>
</dbReference>
<dbReference type="DNASU" id="16885"/>
<dbReference type="Ensembl" id="ENSMUST00000015137.10">
    <property type="protein sequence ID" value="ENSMUSP00000015137.4"/>
    <property type="gene ID" value="ENSMUSG00000029674.14"/>
</dbReference>
<dbReference type="GeneID" id="16885"/>
<dbReference type="KEGG" id="mmu:16885"/>
<dbReference type="UCSC" id="uc008zwt.1">
    <property type="organism name" value="mouse"/>
</dbReference>
<dbReference type="AGR" id="MGI:104572"/>
<dbReference type="CTD" id="3984"/>
<dbReference type="MGI" id="MGI:104572">
    <property type="gene designation" value="Limk1"/>
</dbReference>
<dbReference type="VEuPathDB" id="HostDB:ENSMUSG00000029674"/>
<dbReference type="eggNOG" id="KOG1187">
    <property type="taxonomic scope" value="Eukaryota"/>
</dbReference>
<dbReference type="GeneTree" id="ENSGT00940000156345"/>
<dbReference type="HOGENOM" id="CLU_000288_7_23_1"/>
<dbReference type="InParanoid" id="P53668"/>
<dbReference type="OMA" id="QRICDGQ"/>
<dbReference type="OrthoDB" id="20134at2759"/>
<dbReference type="PhylomeDB" id="P53668"/>
<dbReference type="TreeFam" id="TF318014"/>
<dbReference type="BRENDA" id="2.7.11.1">
    <property type="organism ID" value="3474"/>
</dbReference>
<dbReference type="Reactome" id="R-MMU-2029482">
    <property type="pathway name" value="Regulation of actin dynamics for phagocytic cup formation"/>
</dbReference>
<dbReference type="Reactome" id="R-MMU-399954">
    <property type="pathway name" value="Sema3A PAK dependent Axon repulsion"/>
</dbReference>
<dbReference type="Reactome" id="R-MMU-5627123">
    <property type="pathway name" value="RHO GTPases activate PAKs"/>
</dbReference>
<dbReference type="BioGRID-ORCS" id="16885">
    <property type="hits" value="3 hits in 66 CRISPR screens"/>
</dbReference>
<dbReference type="ChiTaRS" id="Limk1">
    <property type="organism name" value="mouse"/>
</dbReference>
<dbReference type="PRO" id="PR:P53668"/>
<dbReference type="Proteomes" id="UP000000589">
    <property type="component" value="Chromosome 5"/>
</dbReference>
<dbReference type="RNAct" id="P53668">
    <property type="molecule type" value="protein"/>
</dbReference>
<dbReference type="Bgee" id="ENSMUSG00000029674">
    <property type="expression patterns" value="Expressed in motor neuron and 239 other cell types or tissues"/>
</dbReference>
<dbReference type="ExpressionAtlas" id="P53668">
    <property type="expression patterns" value="baseline and differential"/>
</dbReference>
<dbReference type="GO" id="GO:0005737">
    <property type="term" value="C:cytoplasm"/>
    <property type="evidence" value="ECO:0000314"/>
    <property type="project" value="UniProtKB"/>
</dbReference>
<dbReference type="GO" id="GO:0005856">
    <property type="term" value="C:cytoskeleton"/>
    <property type="evidence" value="ECO:0007669"/>
    <property type="project" value="UniProtKB-SubCell"/>
</dbReference>
<dbReference type="GO" id="GO:0005829">
    <property type="term" value="C:cytosol"/>
    <property type="evidence" value="ECO:0007669"/>
    <property type="project" value="Ensembl"/>
</dbReference>
<dbReference type="GO" id="GO:0005925">
    <property type="term" value="C:focal adhesion"/>
    <property type="evidence" value="ECO:0000314"/>
    <property type="project" value="MGI"/>
</dbReference>
<dbReference type="GO" id="GO:0098978">
    <property type="term" value="C:glutamatergic synapse"/>
    <property type="evidence" value="ECO:0007669"/>
    <property type="project" value="Ensembl"/>
</dbReference>
<dbReference type="GO" id="GO:0030027">
    <property type="term" value="C:lamellipodium"/>
    <property type="evidence" value="ECO:0000314"/>
    <property type="project" value="UniProtKB"/>
</dbReference>
<dbReference type="GO" id="GO:0001673">
    <property type="term" value="C:male germ cell nucleus"/>
    <property type="evidence" value="ECO:0000314"/>
    <property type="project" value="MGI"/>
</dbReference>
<dbReference type="GO" id="GO:0016020">
    <property type="term" value="C:membrane"/>
    <property type="evidence" value="ECO:0000314"/>
    <property type="project" value="MGI"/>
</dbReference>
<dbReference type="GO" id="GO:0043005">
    <property type="term" value="C:neuron projection"/>
    <property type="evidence" value="ECO:0000314"/>
    <property type="project" value="UniProtKB"/>
</dbReference>
<dbReference type="GO" id="GO:0016607">
    <property type="term" value="C:nuclear speck"/>
    <property type="evidence" value="ECO:0007669"/>
    <property type="project" value="Ensembl"/>
</dbReference>
<dbReference type="GO" id="GO:0005634">
    <property type="term" value="C:nucleus"/>
    <property type="evidence" value="ECO:0000314"/>
    <property type="project" value="MGI"/>
</dbReference>
<dbReference type="GO" id="GO:0098794">
    <property type="term" value="C:postsynapse"/>
    <property type="evidence" value="ECO:0007669"/>
    <property type="project" value="Ensembl"/>
</dbReference>
<dbReference type="GO" id="GO:0005524">
    <property type="term" value="F:ATP binding"/>
    <property type="evidence" value="ECO:0007669"/>
    <property type="project" value="UniProtKB-KW"/>
</dbReference>
<dbReference type="GO" id="GO:0031072">
    <property type="term" value="F:heat shock protein binding"/>
    <property type="evidence" value="ECO:0007669"/>
    <property type="project" value="Ensembl"/>
</dbReference>
<dbReference type="GO" id="GO:0046872">
    <property type="term" value="F:metal ion binding"/>
    <property type="evidence" value="ECO:0007669"/>
    <property type="project" value="UniProtKB-KW"/>
</dbReference>
<dbReference type="GO" id="GO:0106310">
    <property type="term" value="F:protein serine kinase activity"/>
    <property type="evidence" value="ECO:0007669"/>
    <property type="project" value="RHEA"/>
</dbReference>
<dbReference type="GO" id="GO:0004674">
    <property type="term" value="F:protein serine/threonine kinase activity"/>
    <property type="evidence" value="ECO:0000250"/>
    <property type="project" value="UniProtKB"/>
</dbReference>
<dbReference type="GO" id="GO:1990948">
    <property type="term" value="F:ubiquitin ligase inhibitor activity"/>
    <property type="evidence" value="ECO:0007669"/>
    <property type="project" value="Ensembl"/>
</dbReference>
<dbReference type="GO" id="GO:0031625">
    <property type="term" value="F:ubiquitin protein ligase binding"/>
    <property type="evidence" value="ECO:0007669"/>
    <property type="project" value="Ensembl"/>
</dbReference>
<dbReference type="GO" id="GO:0048675">
    <property type="term" value="P:axon extension"/>
    <property type="evidence" value="ECO:0000316"/>
    <property type="project" value="MGI"/>
</dbReference>
<dbReference type="GO" id="GO:0045773">
    <property type="term" value="P:positive regulation of axon extension"/>
    <property type="evidence" value="ECO:0000316"/>
    <property type="project" value="MGI"/>
</dbReference>
<dbReference type="GO" id="GO:0051496">
    <property type="term" value="P:positive regulation of stress fiber assembly"/>
    <property type="evidence" value="ECO:0000316"/>
    <property type="project" value="MGI"/>
</dbReference>
<dbReference type="GO" id="GO:0006468">
    <property type="term" value="P:protein phosphorylation"/>
    <property type="evidence" value="ECO:0000250"/>
    <property type="project" value="UniProtKB"/>
</dbReference>
<dbReference type="GO" id="GO:0043149">
    <property type="term" value="P:stress fiber assembly"/>
    <property type="evidence" value="ECO:0000316"/>
    <property type="project" value="MGI"/>
</dbReference>
<dbReference type="CDD" id="cd09462">
    <property type="entry name" value="LIM1_LIMK1"/>
    <property type="match status" value="1"/>
</dbReference>
<dbReference type="CDD" id="cd09464">
    <property type="entry name" value="LIM2_LIMK1"/>
    <property type="match status" value="1"/>
</dbReference>
<dbReference type="CDD" id="cd06754">
    <property type="entry name" value="PDZ_LIMK-like"/>
    <property type="match status" value="1"/>
</dbReference>
<dbReference type="CDD" id="cd14221">
    <property type="entry name" value="STKc_LIMK1"/>
    <property type="match status" value="1"/>
</dbReference>
<dbReference type="FunFam" id="1.10.510.10:FF:000282">
    <property type="entry name" value="LIM domain kinase 1"/>
    <property type="match status" value="1"/>
</dbReference>
<dbReference type="FunFam" id="2.10.110.10:FF:000082">
    <property type="entry name" value="LIM domain kinase 1"/>
    <property type="match status" value="1"/>
</dbReference>
<dbReference type="FunFam" id="2.10.110.10:FF:000083">
    <property type="entry name" value="LIM domain kinase 1"/>
    <property type="match status" value="1"/>
</dbReference>
<dbReference type="FunFam" id="2.30.42.10:FF:000101">
    <property type="entry name" value="LIM domain kinase 1"/>
    <property type="match status" value="1"/>
</dbReference>
<dbReference type="FunFam" id="3.30.200.20:FF:000038">
    <property type="entry name" value="LIM domain kinase 2"/>
    <property type="match status" value="1"/>
</dbReference>
<dbReference type="Gene3D" id="2.30.42.10">
    <property type="match status" value="1"/>
</dbReference>
<dbReference type="Gene3D" id="2.10.110.10">
    <property type="entry name" value="Cysteine Rich Protein"/>
    <property type="match status" value="2"/>
</dbReference>
<dbReference type="Gene3D" id="3.30.200.20">
    <property type="entry name" value="Phosphorylase Kinase, domain 1"/>
    <property type="match status" value="1"/>
</dbReference>
<dbReference type="Gene3D" id="1.10.510.10">
    <property type="entry name" value="Transferase(Phosphotransferase) domain 1"/>
    <property type="match status" value="1"/>
</dbReference>
<dbReference type="InterPro" id="IPR050940">
    <property type="entry name" value="Actin_reg-Ser/Thr_kinase"/>
</dbReference>
<dbReference type="InterPro" id="IPR011009">
    <property type="entry name" value="Kinase-like_dom_sf"/>
</dbReference>
<dbReference type="InterPro" id="IPR001478">
    <property type="entry name" value="PDZ"/>
</dbReference>
<dbReference type="InterPro" id="IPR036034">
    <property type="entry name" value="PDZ_sf"/>
</dbReference>
<dbReference type="InterPro" id="IPR000719">
    <property type="entry name" value="Prot_kinase_dom"/>
</dbReference>
<dbReference type="InterPro" id="IPR017441">
    <property type="entry name" value="Protein_kinase_ATP_BS"/>
</dbReference>
<dbReference type="InterPro" id="IPR001245">
    <property type="entry name" value="Ser-Thr/Tyr_kinase_cat_dom"/>
</dbReference>
<dbReference type="InterPro" id="IPR001781">
    <property type="entry name" value="Znf_LIM"/>
</dbReference>
<dbReference type="PANTHER" id="PTHR46485">
    <property type="entry name" value="LIM DOMAIN KINASE 1"/>
    <property type="match status" value="1"/>
</dbReference>
<dbReference type="PANTHER" id="PTHR46485:SF7">
    <property type="entry name" value="LIM DOMAIN KINASE 1"/>
    <property type="match status" value="1"/>
</dbReference>
<dbReference type="Pfam" id="PF00412">
    <property type="entry name" value="LIM"/>
    <property type="match status" value="2"/>
</dbReference>
<dbReference type="Pfam" id="PF00595">
    <property type="entry name" value="PDZ"/>
    <property type="match status" value="1"/>
</dbReference>
<dbReference type="Pfam" id="PF07714">
    <property type="entry name" value="PK_Tyr_Ser-Thr"/>
    <property type="match status" value="1"/>
</dbReference>
<dbReference type="PRINTS" id="PR00109">
    <property type="entry name" value="TYRKINASE"/>
</dbReference>
<dbReference type="SMART" id="SM00132">
    <property type="entry name" value="LIM"/>
    <property type="match status" value="2"/>
</dbReference>
<dbReference type="SMART" id="SM00228">
    <property type="entry name" value="PDZ"/>
    <property type="match status" value="1"/>
</dbReference>
<dbReference type="SUPFAM" id="SSF57716">
    <property type="entry name" value="Glucocorticoid receptor-like (DNA-binding domain)"/>
    <property type="match status" value="3"/>
</dbReference>
<dbReference type="SUPFAM" id="SSF50156">
    <property type="entry name" value="PDZ domain-like"/>
    <property type="match status" value="1"/>
</dbReference>
<dbReference type="SUPFAM" id="SSF56112">
    <property type="entry name" value="Protein kinase-like (PK-like)"/>
    <property type="match status" value="1"/>
</dbReference>
<dbReference type="PROSITE" id="PS00478">
    <property type="entry name" value="LIM_DOMAIN_1"/>
    <property type="match status" value="2"/>
</dbReference>
<dbReference type="PROSITE" id="PS50023">
    <property type="entry name" value="LIM_DOMAIN_2"/>
    <property type="match status" value="2"/>
</dbReference>
<dbReference type="PROSITE" id="PS50106">
    <property type="entry name" value="PDZ"/>
    <property type="match status" value="1"/>
</dbReference>
<dbReference type="PROSITE" id="PS00107">
    <property type="entry name" value="PROTEIN_KINASE_ATP"/>
    <property type="match status" value="1"/>
</dbReference>
<dbReference type="PROSITE" id="PS50011">
    <property type="entry name" value="PROTEIN_KINASE_DOM"/>
    <property type="match status" value="1"/>
</dbReference>
<gene>
    <name type="primary">Limk1</name>
    <name type="synonym">Limk</name>
</gene>
<reference key="1">
    <citation type="journal article" date="1995" name="Oncogene">
        <title>Limk1 is predominantly expressed in neural tissues and phosphorylates serine, threonine and tyrosine residues in vitro.</title>
        <authorList>
            <person name="Proeschel C."/>
            <person name="Blouin M.J."/>
            <person name="Gutowski N.J."/>
            <person name="Ludwig R."/>
            <person name="Noble M."/>
        </authorList>
    </citation>
    <scope>NUCLEOTIDE SEQUENCE [MRNA]</scope>
    <source>
        <strain>C57BL/6J</strain>
    </source>
</reference>
<reference key="2">
    <citation type="journal article" date="1995" name="Mech. Dev.">
        <title>The murine LIM-kinase gene (limk) encodes a novel serine threonine kinase expressed predominantly in trophoblast giant cells and the developing nervous system.</title>
        <authorList>
            <person name="Cheng A.K."/>
            <person name="Robertson E.J."/>
        </authorList>
    </citation>
    <scope>NUCLEOTIDE SEQUENCE [MRNA]</scope>
    <source>
        <strain>CD-1</strain>
    </source>
</reference>
<reference key="3">
    <citation type="journal article" date="2000" name="Mamm. Genome">
        <title>Comparative genomic sequence analysis of the Williams syndrome region (LIMK1-RFC2) of human chromosome 7q11.23.</title>
        <authorList>
            <person name="Martindale D.W."/>
            <person name="Wilson M.D."/>
            <person name="Wang D."/>
            <person name="Burke R.D."/>
            <person name="Chen X."/>
            <person name="Duronio V."/>
            <person name="Koop B.F."/>
        </authorList>
    </citation>
    <scope>NUCLEOTIDE SEQUENCE [GENOMIC DNA]</scope>
    <source>
        <strain>129/SvJ</strain>
    </source>
</reference>
<reference key="4">
    <citation type="journal article" date="2009" name="PLoS Biol.">
        <title>Lineage-specific biology revealed by a finished genome assembly of the mouse.</title>
        <authorList>
            <person name="Church D.M."/>
            <person name="Goodstadt L."/>
            <person name="Hillier L.W."/>
            <person name="Zody M.C."/>
            <person name="Goldstein S."/>
            <person name="She X."/>
            <person name="Bult C.J."/>
            <person name="Agarwala R."/>
            <person name="Cherry J.L."/>
            <person name="DiCuccio M."/>
            <person name="Hlavina W."/>
            <person name="Kapustin Y."/>
            <person name="Meric P."/>
            <person name="Maglott D."/>
            <person name="Birtle Z."/>
            <person name="Marques A.C."/>
            <person name="Graves T."/>
            <person name="Zhou S."/>
            <person name="Teague B."/>
            <person name="Potamousis K."/>
            <person name="Churas C."/>
            <person name="Place M."/>
            <person name="Herschleb J."/>
            <person name="Runnheim R."/>
            <person name="Forrest D."/>
            <person name="Amos-Landgraf J."/>
            <person name="Schwartz D.C."/>
            <person name="Cheng Z."/>
            <person name="Lindblad-Toh K."/>
            <person name="Eichler E.E."/>
            <person name="Ponting C.P."/>
        </authorList>
    </citation>
    <scope>NUCLEOTIDE SEQUENCE [LARGE SCALE GENOMIC DNA]</scope>
    <source>
        <strain>129/Sv</strain>
    </source>
</reference>
<reference key="5">
    <citation type="journal article" date="1994" name="Cell Growth Differ.">
        <title>Kiz-1, a protein with LIM zinc finger and kinase domains, is expressed mainly in neurons.</title>
        <authorList>
            <person name="Bernard O."/>
            <person name="Ganiatsas S."/>
            <person name="Kannourakis G."/>
            <person name="Dringen R."/>
        </authorList>
    </citation>
    <scope>NUCLEOTIDE SEQUENCE [MRNA] OF 15-647</scope>
    <source>
        <strain>BALB/cJ</strain>
    </source>
</reference>
<reference key="6">
    <citation type="journal article" date="2004" name="Cell. Microbiol.">
        <title>Efficient Salmonella entry requires activity cycles of host ADF and cofilin.</title>
        <authorList>
            <person name="Dai S."/>
            <person name="Sarmiere P.D."/>
            <person name="Wiggan O."/>
            <person name="Bamburg J.R."/>
            <person name="Zhou D."/>
        </authorList>
    </citation>
    <scope>FUNCTION</scope>
    <scope>SUBCELLULAR LOCATION</scope>
    <scope>MUTAGENESIS OF ASP-460</scope>
</reference>
<reference key="7">
    <citation type="journal article" date="2005" name="EMBO J.">
        <title>Interplay between components of a novel LIM kinase-slingshot phosphatase complex regulates cofilin.</title>
        <authorList>
            <person name="Soosairajah J."/>
            <person name="Maiti S."/>
            <person name="Wiggan O."/>
            <person name="Sarmiere P."/>
            <person name="Moussi N."/>
            <person name="Sarcevic B."/>
            <person name="Sampath R."/>
            <person name="Bamburg J.R."/>
            <person name="Bernard O."/>
        </authorList>
    </citation>
    <scope>INTERACTION WITH SSH1</scope>
</reference>
<reference key="8">
    <citation type="journal article" date="2005" name="Genes Dev.">
        <title>The ubiquitin ligase Rnf6 regulates local LIM kinase 1 levels in axonal growth cones.</title>
        <authorList>
            <person name="Tursun B."/>
            <person name="Schlueter A."/>
            <person name="Peters M.A."/>
            <person name="Viehweger B."/>
            <person name="Ostendorff H.P."/>
            <person name="Soosairajah J."/>
            <person name="Drung A."/>
            <person name="Bossenz M."/>
            <person name="Johnsen S.A."/>
            <person name="Schweizer M."/>
            <person name="Bernard O."/>
            <person name="Bach I."/>
        </authorList>
    </citation>
    <scope>FUNCTION</scope>
    <scope>INTERACTION WITH RLIM AND RNF6</scope>
    <scope>UBIQUITINATION BY RLIM AND RNF6</scope>
    <scope>SUBCELLULAR LOCATION</scope>
    <scope>DEVELOPMENTAL STAGE</scope>
</reference>
<reference key="9">
    <citation type="journal article" date="2008" name="Mol. Cell. Biol.">
        <title>Nischarin inhibits LIM kinase to regulate cofilin phosphorylation and cell invasion.</title>
        <authorList>
            <person name="Ding Y."/>
            <person name="Milosavljevic T."/>
            <person name="Alahari S.K."/>
        </authorList>
    </citation>
    <scope>INTERACTION WITH NISCH</scope>
</reference>
<reference key="10">
    <citation type="journal article" date="2010" name="Cell">
        <title>A tissue-specific atlas of mouse protein phosphorylation and expression.</title>
        <authorList>
            <person name="Huttlin E.L."/>
            <person name="Jedrychowski M.P."/>
            <person name="Elias J.E."/>
            <person name="Goswami T."/>
            <person name="Rad R."/>
            <person name="Beausoleil S.A."/>
            <person name="Villen J."/>
            <person name="Haas W."/>
            <person name="Sowa M.E."/>
            <person name="Gygi S.P."/>
        </authorList>
    </citation>
    <scope>PHOSPHORYLATION [LARGE SCALE ANALYSIS] AT SER-210; SER-298 AND SER-310</scope>
    <scope>IDENTIFICATION BY MASS SPECTROMETRY [LARGE SCALE ANALYSIS]</scope>
    <source>
        <tissue>Brain</tissue>
        <tissue>Lung</tissue>
        <tissue>Spleen</tissue>
    </source>
</reference>
<reference key="11">
    <citation type="journal article" date="2014" name="J. Biol. Chem.">
        <title>Adaptor protein LRAP25 mediates myotonic dystrophy kinase-related Cdc42-binding kinase (MRCK) regulation of LIMK1 protein in lamellipodial F-actin dynamics.</title>
        <authorList>
            <person name="Lee I.C."/>
            <person name="Leung T."/>
            <person name="Tan I."/>
        </authorList>
    </citation>
    <scope>INTERACTION WITH CDC42BPA; CDC42BPB AND FAM89B</scope>
    <scope>SUBCELLULAR LOCATION</scope>
    <scope>PHOSPHORYLATION AT THR-508</scope>
    <source>
        <tissue>Brain</tissue>
    </source>
</reference>
<organism>
    <name type="scientific">Mus musculus</name>
    <name type="common">Mouse</name>
    <dbReference type="NCBI Taxonomy" id="10090"/>
    <lineage>
        <taxon>Eukaryota</taxon>
        <taxon>Metazoa</taxon>
        <taxon>Chordata</taxon>
        <taxon>Craniata</taxon>
        <taxon>Vertebrata</taxon>
        <taxon>Euteleostomi</taxon>
        <taxon>Mammalia</taxon>
        <taxon>Eutheria</taxon>
        <taxon>Euarchontoglires</taxon>
        <taxon>Glires</taxon>
        <taxon>Rodentia</taxon>
        <taxon>Myomorpha</taxon>
        <taxon>Muroidea</taxon>
        <taxon>Muridae</taxon>
        <taxon>Murinae</taxon>
        <taxon>Mus</taxon>
        <taxon>Mus</taxon>
    </lineage>
</organism>
<name>LIMK1_MOUSE</name>
<accession>P53668</accession>
<feature type="chain" id="PRO_0000075804" description="LIM domain kinase 1">
    <location>
        <begin position="1"/>
        <end position="647"/>
    </location>
</feature>
<feature type="domain" description="LIM zinc-binding 1" evidence="2">
    <location>
        <begin position="25"/>
        <end position="75"/>
    </location>
</feature>
<feature type="domain" description="LIM zinc-binding 2" evidence="2">
    <location>
        <begin position="84"/>
        <end position="137"/>
    </location>
</feature>
<feature type="domain" description="PDZ" evidence="3">
    <location>
        <begin position="165"/>
        <end position="258"/>
    </location>
</feature>
<feature type="domain" description="Protein kinase" evidence="4">
    <location>
        <begin position="339"/>
        <end position="604"/>
    </location>
</feature>
<feature type="region of interest" description="Disordered" evidence="5">
    <location>
        <begin position="256"/>
        <end position="319"/>
    </location>
</feature>
<feature type="compositionally biased region" description="Low complexity" evidence="5">
    <location>
        <begin position="266"/>
        <end position="277"/>
    </location>
</feature>
<feature type="compositionally biased region" description="Polar residues" evidence="5">
    <location>
        <begin position="278"/>
        <end position="289"/>
    </location>
</feature>
<feature type="compositionally biased region" description="Polar residues" evidence="5">
    <location>
        <begin position="298"/>
        <end position="313"/>
    </location>
</feature>
<feature type="active site" evidence="11">
    <location>
        <position position="460"/>
    </location>
</feature>
<feature type="binding site" evidence="4">
    <location>
        <begin position="345"/>
        <end position="353"/>
    </location>
    <ligand>
        <name>ATP</name>
        <dbReference type="ChEBI" id="CHEBI:30616"/>
    </ligand>
</feature>
<feature type="binding site" evidence="4">
    <location>
        <position position="368"/>
    </location>
    <ligand>
        <name>ATP</name>
        <dbReference type="ChEBI" id="CHEBI:30616"/>
    </ligand>
</feature>
<feature type="modified residue" description="Phosphoserine" evidence="12">
    <location>
        <position position="210"/>
    </location>
</feature>
<feature type="modified residue" description="Phosphothreonine" evidence="1">
    <location>
        <position position="229"/>
    </location>
</feature>
<feature type="modified residue" description="Phosphoserine" evidence="12">
    <location>
        <position position="298"/>
    </location>
</feature>
<feature type="modified residue" description="Phosphoserine" evidence="1">
    <location>
        <position position="302"/>
    </location>
</feature>
<feature type="modified residue" description="Phosphoserine" evidence="1">
    <location>
        <position position="307"/>
    </location>
</feature>
<feature type="modified residue" description="Phosphoserine" evidence="12">
    <location>
        <position position="310"/>
    </location>
</feature>
<feature type="modified residue" description="Phosphoserine; by MAPKAPK2" evidence="1">
    <location>
        <position position="323"/>
    </location>
</feature>
<feature type="modified residue" description="Phosphoserine" evidence="1">
    <location>
        <position position="337"/>
    </location>
</feature>
<feature type="modified residue" description="Phosphothreonine; by ROCK1" evidence="10">
    <location>
        <position position="508"/>
    </location>
</feature>
<feature type="mutagenesis site" description="Abrogates kinase activity." evidence="6">
    <original>D</original>
    <variation>G</variation>
    <location>
        <position position="460"/>
    </location>
</feature>
<feature type="sequence conflict" description="In Ref. 2; AAC52254." evidence="11" ref="2">
    <original>RV</original>
    <variation>EC</variation>
    <location>
        <begin position="200"/>
        <end position="201"/>
    </location>
</feature>
<feature type="sequence conflict" description="In Ref. 2; AAC52254." evidence="11" ref="2">
    <original>DPS</original>
    <variation>GSQ</variation>
    <location>
        <begin position="269"/>
        <end position="271"/>
    </location>
</feature>
<feature type="sequence conflict" description="In Ref. 2; AAC52254." evidence="11" ref="2">
    <original>VV</original>
    <variation>C</variation>
    <location>
        <begin position="326"/>
        <end position="327"/>
    </location>
</feature>
<feature type="sequence conflict" description="In Ref. 5; AAC52147." evidence="11" ref="5">
    <original>G</original>
    <variation>P</variation>
    <location>
        <position position="523"/>
    </location>
</feature>
<comment type="function">
    <text evidence="1 6 8">Serine/threonine-protein kinase that plays an essential role in the regulation of actin filament dynamics (PubMed:15056216, PubMed:16204183). Acts downstream of several Rho family GTPase signal transduction pathways (PubMed:15056216). Activated by upstream kinases including ROCK1, PAK1 and PAK4, which phosphorylate LIMK1 on a threonine residue located in its activation loop. LIMK1 subsequently phosphorylates and inactivates the actin binding/depolymerizing factors cofilin-1/CFL1, cofilin-2/CFL2 and destrin/DSTN, thereby preventing the cleavage of filamentous actin (F-actin), and stabilizing the actin cytoskeleton. In this way LIMK1 regulates several actin-dependent biological processes including cell motility, cell cycle progression, and differentiation. Phosphorylates TPPP on serine residues, thereby promoting microtubule disassembly. Stimulates axonal outgrowth and may be involved in brain development (By similarity).</text>
</comment>
<comment type="catalytic activity">
    <reaction evidence="1">
        <text>L-seryl-[protein] + ATP = O-phospho-L-seryl-[protein] + ADP + H(+)</text>
        <dbReference type="Rhea" id="RHEA:17989"/>
        <dbReference type="Rhea" id="RHEA-COMP:9863"/>
        <dbReference type="Rhea" id="RHEA-COMP:11604"/>
        <dbReference type="ChEBI" id="CHEBI:15378"/>
        <dbReference type="ChEBI" id="CHEBI:29999"/>
        <dbReference type="ChEBI" id="CHEBI:30616"/>
        <dbReference type="ChEBI" id="CHEBI:83421"/>
        <dbReference type="ChEBI" id="CHEBI:456216"/>
        <dbReference type="EC" id="2.7.11.1"/>
    </reaction>
    <physiologicalReaction direction="left-to-right" evidence="1">
        <dbReference type="Rhea" id="RHEA:17990"/>
    </physiologicalReaction>
</comment>
<comment type="catalytic activity">
    <reaction evidence="1">
        <text>L-threonyl-[protein] + ATP = O-phospho-L-threonyl-[protein] + ADP + H(+)</text>
        <dbReference type="Rhea" id="RHEA:46608"/>
        <dbReference type="Rhea" id="RHEA-COMP:11060"/>
        <dbReference type="Rhea" id="RHEA-COMP:11605"/>
        <dbReference type="ChEBI" id="CHEBI:15378"/>
        <dbReference type="ChEBI" id="CHEBI:30013"/>
        <dbReference type="ChEBI" id="CHEBI:30616"/>
        <dbReference type="ChEBI" id="CHEBI:61977"/>
        <dbReference type="ChEBI" id="CHEBI:456216"/>
        <dbReference type="EC" id="2.7.11.1"/>
    </reaction>
    <physiologicalReaction direction="left-to-right" evidence="1">
        <dbReference type="Rhea" id="RHEA:46609"/>
    </physiologicalReaction>
</comment>
<comment type="subunit">
    <text evidence="1 7 8 9 10">Self-associates to form homodimers. Interacts with HSP90AA1; this interaction promotes LIMK1 dimerization and subsequent transphosphorylation. Interacts with CDKN1C (By similarity). Interacts (via LIM domain) with the cytoplasmic domain of NRG1 (By similarity). Interacts with NISCH (PubMed:18332102). Interacts with SSH1 (PubMed:15660133). Interacts with RLIM and RNF6 (PubMed:16204183). Interacts (via LIM zinc-binding domains) with FAM89B/LRAP25 (via LRR repeat). Forms a tripartite complex with CDC42BPA, CDC42BPB and FAM89B/LRAP25 (PubMed:25107909).</text>
</comment>
<comment type="subcellular location">
    <subcellularLocation>
        <location evidence="8">Cytoplasm</location>
    </subcellularLocation>
    <subcellularLocation>
        <location evidence="1">Nucleus</location>
    </subcellularLocation>
    <subcellularLocation>
        <location evidence="1">Cytoplasm</location>
        <location evidence="1">Cytoskeleton</location>
    </subcellularLocation>
    <subcellularLocation>
        <location evidence="10">Cell projection</location>
        <location evidence="10">Lamellipodium</location>
    </subcellularLocation>
    <text evidence="10">Predominantly found in the cytoplasm (By similarity). Localizes in the lamellipodium in a CDC42BPA, CDC42BPB and FAM89B/LRAP25-dependent manner.</text>
</comment>
<comment type="tissue specificity">
    <text>Highest expression in the nervous system, particularly in the spinal cord and the cranial nerve and dorsal root ganglia.</text>
</comment>
<comment type="developmental stage">
    <text evidence="8">Expressed in ventral neural tube and axonal projections at 12.5 dpc-13 dpc (at protein level).</text>
</comment>
<comment type="PTM">
    <text evidence="1">Autophosphorylated. Phosphorylated on Thr-508 by ROCK1 and PAK1, resulting in activation. Phosphorylated by PAK4 which increases the ability of LIMK1 to phosphorylate cofilin. Phosphorylated at Ser-323 by MAPKAPK2 during activation of VEGFA-induced signaling, which results in activation of LIMK1 and promotion of actin reorganization, cell migration, and tubule formation of endothelial cells. Dephosphorylated and inactivated by SSH1. Phosphorylated by CDC42BP (By similarity).</text>
</comment>
<comment type="PTM">
    <text evidence="8">Ubiquitinated. 'Lys-48'-linked polyubiquitination by RNF6 leads to proteasomal degradation through the 26S proteasome, modulating LIMK1 levels in the growth cone and its effect on axonal outgrowth. Also polyubiquitinated by RLIM.</text>
</comment>
<comment type="similarity">
    <text evidence="11">Belongs to the protein kinase superfamily. TKL Ser/Thr protein kinase family.</text>
</comment>
<sequence length="647" mass="72793">MRLTLLCCTWREERMGEEGSELPVCASCGQRIYDGQYLQALNADWHADCFRCCECSVSLSHQYYEKDGQLFCKKDYWARYGESCHGCSEHITKGLVMVAGELKYHPECFICLACGNFIGDGDTYTLVEHSKLYCGQCYYQTVVTPVIEQILPDSPGSHLPHTVTLVSIPASAHGKRGLSVSIDPPHGPPGCGTEHSHTVRVQGVDPGCMSPDVKNSIHVGDRILEINGTPIRNVPLDEIDLLIQETSRLLQLTLEHDPHDSLGHGPVSDPSPLSSPVHTPSGQAASSARQKPVLRSCSIDTSPGTSSLASPASQRKDLGRSESLRVVCRPHRIFRPSDLIHGEVLGKGCFGQAIKVTHRETGEVMVMKELIRFDEETQRTFLKEVKVMRCLEHPNVLKFIGVLYKDKRLNFITEYIKGGTLRGIIKNMDSQYPWSQRVSFAKDIASGMAYLHSMNIIHRDLNSHNCLVRENRNVVVADFGLARLMIDEKNQSEDLRSLKKPDRKKRYTVVGNPYWMAPEMINGRSYDEKVDVFSFGIVLCEIIGRVNADPDYLPRTMDFGLNVRGFLDRYCPPNCPPSFFPITVRCCDLDPEKRPSFVKLEQWLETLRMHLSGHLPLGPQLEQLERGFWETYRRGESSLPAHPEVPD</sequence>
<proteinExistence type="evidence at protein level"/>
<keyword id="KW-0067">ATP-binding</keyword>
<keyword id="KW-0966">Cell projection</keyword>
<keyword id="KW-0963">Cytoplasm</keyword>
<keyword id="KW-0206">Cytoskeleton</keyword>
<keyword id="KW-0418">Kinase</keyword>
<keyword id="KW-0440">LIM domain</keyword>
<keyword id="KW-0479">Metal-binding</keyword>
<keyword id="KW-0547">Nucleotide-binding</keyword>
<keyword id="KW-0539">Nucleus</keyword>
<keyword id="KW-0597">Phosphoprotein</keyword>
<keyword id="KW-1185">Reference proteome</keyword>
<keyword id="KW-0677">Repeat</keyword>
<keyword id="KW-0723">Serine/threonine-protein kinase</keyword>
<keyword id="KW-0808">Transferase</keyword>
<keyword id="KW-0832">Ubl conjugation</keyword>
<keyword id="KW-0862">Zinc</keyword>